<keyword id="KW-0067">ATP-binding</keyword>
<keyword id="KW-0150">Chloroplast</keyword>
<keyword id="KW-0324">Glycolysis</keyword>
<keyword id="KW-0418">Kinase</keyword>
<keyword id="KW-0472">Membrane</keyword>
<keyword id="KW-0547">Nucleotide-binding</keyword>
<keyword id="KW-0934">Plastid</keyword>
<keyword id="KW-1002">Plastid outer membrane</keyword>
<keyword id="KW-1185">Reference proteome</keyword>
<keyword id="KW-0808">Transferase</keyword>
<keyword id="KW-0812">Transmembrane</keyword>
<keyword id="KW-1133">Transmembrane helix</keyword>
<proteinExistence type="evidence at protein level"/>
<dbReference type="EC" id="2.7.1.1" evidence="9"/>
<dbReference type="EMBL" id="DQ116387">
    <property type="protein sequence ID" value="AAZ93622.1"/>
    <property type="molecule type" value="mRNA"/>
</dbReference>
<dbReference type="EMBL" id="AF372831">
    <property type="protein sequence ID" value="AAK51559.1"/>
    <property type="molecule type" value="mRNA"/>
</dbReference>
<dbReference type="EMBL" id="AC118284">
    <property type="protein sequence ID" value="AAV59322.1"/>
    <property type="molecule type" value="Genomic_DNA"/>
</dbReference>
<dbReference type="EMBL" id="AC144740">
    <property type="protein sequence ID" value="AAV44032.1"/>
    <property type="molecule type" value="Genomic_DNA"/>
</dbReference>
<dbReference type="EMBL" id="AP008211">
    <property type="protein sequence ID" value="BAF17996.1"/>
    <property type="molecule type" value="Genomic_DNA"/>
</dbReference>
<dbReference type="EMBL" id="AP014961">
    <property type="protein sequence ID" value="BAS94954.1"/>
    <property type="molecule type" value="Genomic_DNA"/>
</dbReference>
<dbReference type="EMBL" id="CM000142">
    <property type="protein sequence ID" value="EEE64409.1"/>
    <property type="molecule type" value="Genomic_DNA"/>
</dbReference>
<dbReference type="RefSeq" id="XP_015639323.1">
    <property type="nucleotide sequence ID" value="XM_015783837.1"/>
</dbReference>
<dbReference type="SMR" id="Q5W676"/>
<dbReference type="FunCoup" id="Q5W676">
    <property type="interactions" value="1428"/>
</dbReference>
<dbReference type="STRING" id="39947.Q5W676"/>
<dbReference type="PaxDb" id="39947-Q5W676"/>
<dbReference type="EnsemblPlants" id="Os05t0522500-01">
    <property type="protein sequence ID" value="Os05t0522500-01"/>
    <property type="gene ID" value="Os05g0522500"/>
</dbReference>
<dbReference type="Gramene" id="Os05t0522500-01">
    <property type="protein sequence ID" value="Os05t0522500-01"/>
    <property type="gene ID" value="Os05g0522500"/>
</dbReference>
<dbReference type="KEGG" id="dosa:Os05g0522500"/>
<dbReference type="eggNOG" id="KOG1369">
    <property type="taxonomic scope" value="Eukaryota"/>
</dbReference>
<dbReference type="HOGENOM" id="CLU_014393_5_1_1"/>
<dbReference type="InParanoid" id="Q5W676"/>
<dbReference type="OMA" id="FMAINCE"/>
<dbReference type="OrthoDB" id="419537at2759"/>
<dbReference type="BRENDA" id="2.7.1.1">
    <property type="organism ID" value="4460"/>
</dbReference>
<dbReference type="UniPathway" id="UPA00109">
    <property type="reaction ID" value="UER00180"/>
</dbReference>
<dbReference type="UniPathway" id="UPA00242"/>
<dbReference type="Proteomes" id="UP000000763">
    <property type="component" value="Chromosome 5"/>
</dbReference>
<dbReference type="Proteomes" id="UP000007752">
    <property type="component" value="Chromosome 5"/>
</dbReference>
<dbReference type="Proteomes" id="UP000059680">
    <property type="component" value="Chromosome 5"/>
</dbReference>
<dbReference type="GO" id="GO:0009707">
    <property type="term" value="C:chloroplast outer membrane"/>
    <property type="evidence" value="ECO:0007669"/>
    <property type="project" value="UniProtKB-SubCell"/>
</dbReference>
<dbReference type="GO" id="GO:0005829">
    <property type="term" value="C:cytosol"/>
    <property type="evidence" value="ECO:0000318"/>
    <property type="project" value="GO_Central"/>
</dbReference>
<dbReference type="GO" id="GO:0005739">
    <property type="term" value="C:mitochondrion"/>
    <property type="evidence" value="ECO:0000314"/>
    <property type="project" value="CACAO"/>
</dbReference>
<dbReference type="GO" id="GO:0005524">
    <property type="term" value="F:ATP binding"/>
    <property type="evidence" value="ECO:0007669"/>
    <property type="project" value="UniProtKB-KW"/>
</dbReference>
<dbReference type="GO" id="GO:0005536">
    <property type="term" value="F:D-glucose binding"/>
    <property type="evidence" value="ECO:0007669"/>
    <property type="project" value="InterPro"/>
</dbReference>
<dbReference type="GO" id="GO:0008865">
    <property type="term" value="F:fructokinase activity"/>
    <property type="evidence" value="ECO:0000318"/>
    <property type="project" value="GO_Central"/>
</dbReference>
<dbReference type="GO" id="GO:0004340">
    <property type="term" value="F:glucokinase activity"/>
    <property type="evidence" value="ECO:0000315"/>
    <property type="project" value="CACAO"/>
</dbReference>
<dbReference type="GO" id="GO:0051156">
    <property type="term" value="P:glucose 6-phosphate metabolic process"/>
    <property type="evidence" value="ECO:0000318"/>
    <property type="project" value="GO_Central"/>
</dbReference>
<dbReference type="GO" id="GO:0006006">
    <property type="term" value="P:glucose metabolic process"/>
    <property type="evidence" value="ECO:0000318"/>
    <property type="project" value="GO_Central"/>
</dbReference>
<dbReference type="GO" id="GO:0006096">
    <property type="term" value="P:glycolytic process"/>
    <property type="evidence" value="ECO:0000318"/>
    <property type="project" value="GO_Central"/>
</dbReference>
<dbReference type="GO" id="GO:0001678">
    <property type="term" value="P:intracellular glucose homeostasis"/>
    <property type="evidence" value="ECO:0000318"/>
    <property type="project" value="GO_Central"/>
</dbReference>
<dbReference type="GO" id="GO:0009749">
    <property type="term" value="P:response to glucose"/>
    <property type="evidence" value="ECO:0000315"/>
    <property type="project" value="CACAO"/>
</dbReference>
<dbReference type="CDD" id="cd24020">
    <property type="entry name" value="ASKHA_NBD_HK_plant"/>
    <property type="match status" value="1"/>
</dbReference>
<dbReference type="FunFam" id="3.30.420.40:FF:000034">
    <property type="entry name" value="Phosphotransferase"/>
    <property type="match status" value="1"/>
</dbReference>
<dbReference type="FunFam" id="3.40.367.20:FF:000003">
    <property type="entry name" value="Phosphotransferase"/>
    <property type="match status" value="1"/>
</dbReference>
<dbReference type="Gene3D" id="3.30.420.40">
    <property type="match status" value="1"/>
</dbReference>
<dbReference type="Gene3D" id="3.40.367.20">
    <property type="match status" value="1"/>
</dbReference>
<dbReference type="InterPro" id="IPR043129">
    <property type="entry name" value="ATPase_NBD"/>
</dbReference>
<dbReference type="InterPro" id="IPR001312">
    <property type="entry name" value="Hexokinase"/>
</dbReference>
<dbReference type="InterPro" id="IPR019807">
    <property type="entry name" value="Hexokinase_BS"/>
</dbReference>
<dbReference type="InterPro" id="IPR022673">
    <property type="entry name" value="Hexokinase_C"/>
</dbReference>
<dbReference type="InterPro" id="IPR022672">
    <property type="entry name" value="Hexokinase_N"/>
</dbReference>
<dbReference type="PANTHER" id="PTHR19443">
    <property type="entry name" value="HEXOKINASE"/>
    <property type="match status" value="1"/>
</dbReference>
<dbReference type="PANTHER" id="PTHR19443:SF22">
    <property type="entry name" value="HEXOKINASE-5"/>
    <property type="match status" value="1"/>
</dbReference>
<dbReference type="Pfam" id="PF00349">
    <property type="entry name" value="Hexokinase_1"/>
    <property type="match status" value="1"/>
</dbReference>
<dbReference type="Pfam" id="PF03727">
    <property type="entry name" value="Hexokinase_2"/>
    <property type="match status" value="1"/>
</dbReference>
<dbReference type="PRINTS" id="PR00475">
    <property type="entry name" value="HEXOKINASE"/>
</dbReference>
<dbReference type="SUPFAM" id="SSF53067">
    <property type="entry name" value="Actin-like ATPase domain"/>
    <property type="match status" value="2"/>
</dbReference>
<dbReference type="PROSITE" id="PS00378">
    <property type="entry name" value="HEXOKINASE_1"/>
    <property type="match status" value="1"/>
</dbReference>
<dbReference type="PROSITE" id="PS51748">
    <property type="entry name" value="HEXOKINASE_2"/>
    <property type="match status" value="1"/>
</dbReference>
<reference key="1">
    <citation type="journal article" date="2006" name="Planta">
        <title>Structure, expression, and functional analysis of the hexokinase gene family in rice (Oryza sativa L.).</title>
        <authorList>
            <person name="Cho J.-I."/>
            <person name="Ryoo N."/>
            <person name="Ko S."/>
            <person name="Lee S.-K."/>
            <person name="Lee J."/>
            <person name="Jung K.-H."/>
            <person name="Lee Y.-H."/>
            <person name="Bhoo S.H."/>
            <person name="Winderickx J."/>
            <person name="An G."/>
            <person name="Hahn T.-R."/>
            <person name="Jeon J.-S."/>
        </authorList>
    </citation>
    <scope>NUCLEOTIDE SEQUENCE [MRNA]</scope>
    <scope>FUNCTION</scope>
    <scope>TISSUE SPECIFICITY</scope>
    <scope>DEVELOPMENTAL STAGE</scope>
    <scope>INDUCTION</scope>
    <scope>NOMENCLATURE</scope>
    <source>
        <strain>cv. Jinmi</strain>
    </source>
</reference>
<reference key="2">
    <citation type="submission" date="2001-04" db="EMBL/GenBank/DDBJ databases">
        <title>Rice hexokinase I mRNA.</title>
        <authorList>
            <person name="Wu P."/>
            <person name="Jiang H.-W."/>
            <person name="Yi K.-K."/>
        </authorList>
    </citation>
    <scope>NUCLEOTIDE SEQUENCE [MRNA]</scope>
</reference>
<reference key="3">
    <citation type="journal article" date="2005" name="Mol. Genet. Genomics">
        <title>A fine physical map of the rice chromosome 5.</title>
        <authorList>
            <person name="Cheng C.-H."/>
            <person name="Chung M.C."/>
            <person name="Liu S.-M."/>
            <person name="Chen S.-K."/>
            <person name="Kao F.Y."/>
            <person name="Lin S.-J."/>
            <person name="Hsiao S.-H."/>
            <person name="Tseng I.C."/>
            <person name="Hsing Y.-I.C."/>
            <person name="Wu H.-P."/>
            <person name="Chen C.-S."/>
            <person name="Shaw J.-F."/>
            <person name="Wu J."/>
            <person name="Matsumoto T."/>
            <person name="Sasaki T."/>
            <person name="Chen H.-C."/>
            <person name="Chow T.-Y."/>
        </authorList>
    </citation>
    <scope>NUCLEOTIDE SEQUENCE [LARGE SCALE GENOMIC DNA]</scope>
    <source>
        <strain>cv. Nipponbare</strain>
    </source>
</reference>
<reference key="4">
    <citation type="journal article" date="2005" name="Nature">
        <title>The map-based sequence of the rice genome.</title>
        <authorList>
            <consortium name="International rice genome sequencing project (IRGSP)"/>
        </authorList>
    </citation>
    <scope>NUCLEOTIDE SEQUENCE [LARGE SCALE GENOMIC DNA]</scope>
    <source>
        <strain>cv. Nipponbare</strain>
    </source>
</reference>
<reference key="5">
    <citation type="journal article" date="2008" name="Nucleic Acids Res.">
        <title>The rice annotation project database (RAP-DB): 2008 update.</title>
        <authorList>
            <consortium name="The rice annotation project (RAP)"/>
        </authorList>
    </citation>
    <scope>GENOME REANNOTATION</scope>
    <source>
        <strain>cv. Nipponbare</strain>
    </source>
</reference>
<reference key="6">
    <citation type="journal article" date="2013" name="Rice">
        <title>Improvement of the Oryza sativa Nipponbare reference genome using next generation sequence and optical map data.</title>
        <authorList>
            <person name="Kawahara Y."/>
            <person name="de la Bastide M."/>
            <person name="Hamilton J.P."/>
            <person name="Kanamori H."/>
            <person name="McCombie W.R."/>
            <person name="Ouyang S."/>
            <person name="Schwartz D.C."/>
            <person name="Tanaka T."/>
            <person name="Wu J."/>
            <person name="Zhou S."/>
            <person name="Childs K.L."/>
            <person name="Davidson R.M."/>
            <person name="Lin H."/>
            <person name="Quesada-Ocampo L."/>
            <person name="Vaillancourt B."/>
            <person name="Sakai H."/>
            <person name="Lee S.S."/>
            <person name="Kim J."/>
            <person name="Numa H."/>
            <person name="Itoh T."/>
            <person name="Buell C.R."/>
            <person name="Matsumoto T."/>
        </authorList>
    </citation>
    <scope>GENOME REANNOTATION</scope>
    <source>
        <strain>cv. Nipponbare</strain>
    </source>
</reference>
<reference key="7">
    <citation type="journal article" date="2005" name="PLoS Biol.">
        <title>The genomes of Oryza sativa: a history of duplications.</title>
        <authorList>
            <person name="Yu J."/>
            <person name="Wang J."/>
            <person name="Lin W."/>
            <person name="Li S."/>
            <person name="Li H."/>
            <person name="Zhou J."/>
            <person name="Ni P."/>
            <person name="Dong W."/>
            <person name="Hu S."/>
            <person name="Zeng C."/>
            <person name="Zhang J."/>
            <person name="Zhang Y."/>
            <person name="Li R."/>
            <person name="Xu Z."/>
            <person name="Li S."/>
            <person name="Li X."/>
            <person name="Zheng H."/>
            <person name="Cong L."/>
            <person name="Lin L."/>
            <person name="Yin J."/>
            <person name="Geng J."/>
            <person name="Li G."/>
            <person name="Shi J."/>
            <person name="Liu J."/>
            <person name="Lv H."/>
            <person name="Li J."/>
            <person name="Wang J."/>
            <person name="Deng Y."/>
            <person name="Ran L."/>
            <person name="Shi X."/>
            <person name="Wang X."/>
            <person name="Wu Q."/>
            <person name="Li C."/>
            <person name="Ren X."/>
            <person name="Wang J."/>
            <person name="Wang X."/>
            <person name="Li D."/>
            <person name="Liu D."/>
            <person name="Zhang X."/>
            <person name="Ji Z."/>
            <person name="Zhao W."/>
            <person name="Sun Y."/>
            <person name="Zhang Z."/>
            <person name="Bao J."/>
            <person name="Han Y."/>
            <person name="Dong L."/>
            <person name="Ji J."/>
            <person name="Chen P."/>
            <person name="Wu S."/>
            <person name="Liu J."/>
            <person name="Xiao Y."/>
            <person name="Bu D."/>
            <person name="Tan J."/>
            <person name="Yang L."/>
            <person name="Ye C."/>
            <person name="Zhang J."/>
            <person name="Xu J."/>
            <person name="Zhou Y."/>
            <person name="Yu Y."/>
            <person name="Zhang B."/>
            <person name="Zhuang S."/>
            <person name="Wei H."/>
            <person name="Liu B."/>
            <person name="Lei M."/>
            <person name="Yu H."/>
            <person name="Li Y."/>
            <person name="Xu H."/>
            <person name="Wei S."/>
            <person name="He X."/>
            <person name="Fang L."/>
            <person name="Zhang Z."/>
            <person name="Zhang Y."/>
            <person name="Huang X."/>
            <person name="Su Z."/>
            <person name="Tong W."/>
            <person name="Li J."/>
            <person name="Tong Z."/>
            <person name="Li S."/>
            <person name="Ye J."/>
            <person name="Wang L."/>
            <person name="Fang L."/>
            <person name="Lei T."/>
            <person name="Chen C.-S."/>
            <person name="Chen H.-C."/>
            <person name="Xu Z."/>
            <person name="Li H."/>
            <person name="Huang H."/>
            <person name="Zhang F."/>
            <person name="Xu H."/>
            <person name="Li N."/>
            <person name="Zhao C."/>
            <person name="Li S."/>
            <person name="Dong L."/>
            <person name="Huang Y."/>
            <person name="Li L."/>
            <person name="Xi Y."/>
            <person name="Qi Q."/>
            <person name="Li W."/>
            <person name="Zhang B."/>
            <person name="Hu W."/>
            <person name="Zhang Y."/>
            <person name="Tian X."/>
            <person name="Jiao Y."/>
            <person name="Liang X."/>
            <person name="Jin J."/>
            <person name="Gao L."/>
            <person name="Zheng W."/>
            <person name="Hao B."/>
            <person name="Liu S.-M."/>
            <person name="Wang W."/>
            <person name="Yuan L."/>
            <person name="Cao M."/>
            <person name="McDermott J."/>
            <person name="Samudrala R."/>
            <person name="Wang J."/>
            <person name="Wong G.K.-S."/>
            <person name="Yang H."/>
        </authorList>
    </citation>
    <scope>NUCLEOTIDE SEQUENCE [LARGE SCALE GENOMIC DNA]</scope>
    <source>
        <strain>cv. Nipponbare</strain>
    </source>
</reference>
<reference key="8">
    <citation type="journal article" date="2009" name="Plant Physiol.">
        <title>Role of the rice hexokinases OsHXK5 and OsHXK6 as glucose sensors.</title>
        <authorList>
            <person name="Cho J.I."/>
            <person name="Ryoo N."/>
            <person name="Eom J.S."/>
            <person name="Lee D.W."/>
            <person name="Kim H.B."/>
            <person name="Jeong S.W."/>
            <person name="Lee Y.H."/>
            <person name="Kwon Y.K."/>
            <person name="Cho M.H."/>
            <person name="Bhoo S.H."/>
            <person name="Hahn T.R."/>
            <person name="Park Y.I."/>
            <person name="Hwang I."/>
            <person name="Sheen J."/>
            <person name="Jeon J.S."/>
        </authorList>
    </citation>
    <scope>FUNCTION</scope>
    <scope>MUTAGENESIS OF GLY-113 AND SER-186</scope>
</reference>
<reference key="9">
    <citation type="journal article" date="2020" name="J. Exp. Bot.">
        <title>Deficiency of rice hexokinase HXK5 impairs synthesis and utilization of starch in pollen grains and causes male sterility.</title>
        <authorList>
            <person name="Lee S.K."/>
            <person name="Kim H."/>
            <person name="Cho J.I."/>
            <person name="Nguyen C.D."/>
            <person name="Moon S."/>
            <person name="Park J.E."/>
            <person name="Park H.R."/>
            <person name="Huh J.H."/>
            <person name="Jung K.H."/>
            <person name="Guiderdoni E."/>
            <person name="Jeon J.S."/>
        </authorList>
    </citation>
    <scope>FUNCTION</scope>
    <scope>DEVELOPMENTAL STAGE</scope>
    <scope>DISRUPTION PHENOTYPE</scope>
</reference>
<organism>
    <name type="scientific">Oryza sativa subsp. japonica</name>
    <name type="common">Rice</name>
    <dbReference type="NCBI Taxonomy" id="39947"/>
    <lineage>
        <taxon>Eukaryota</taxon>
        <taxon>Viridiplantae</taxon>
        <taxon>Streptophyta</taxon>
        <taxon>Embryophyta</taxon>
        <taxon>Tracheophyta</taxon>
        <taxon>Spermatophyta</taxon>
        <taxon>Magnoliopsida</taxon>
        <taxon>Liliopsida</taxon>
        <taxon>Poales</taxon>
        <taxon>Poaceae</taxon>
        <taxon>BOP clade</taxon>
        <taxon>Oryzoideae</taxon>
        <taxon>Oryzeae</taxon>
        <taxon>Oryzinae</taxon>
        <taxon>Oryza</taxon>
        <taxon>Oryza sativa</taxon>
    </lineage>
</organism>
<gene>
    <name type="primary">HXK5</name>
    <name evidence="10" type="ordered locus">Os05g0522500</name>
    <name evidence="8" type="ordered locus">LOC_Os05g44760</name>
    <name type="ORF">OJ1087_C03.12</name>
    <name evidence="11" type="ORF">OsJ_19253</name>
    <name type="ORF">OSJNBa0075A10.5</name>
</gene>
<protein>
    <recommendedName>
        <fullName>Hexokinase-5</fullName>
        <ecNumber evidence="9">2.7.1.1</ecNumber>
    </recommendedName>
    <alternativeName>
        <fullName>Hexokinase I</fullName>
    </alternativeName>
</protein>
<feature type="chain" id="PRO_0000247568" description="Hexokinase-5">
    <location>
        <begin position="1"/>
        <end position="507"/>
    </location>
</feature>
<feature type="transmembrane region" description="Helical" evidence="3">
    <location>
        <begin position="4"/>
        <end position="24"/>
    </location>
</feature>
<feature type="domain" description="Hexokinase" evidence="4">
    <location>
        <begin position="44"/>
        <end position="498"/>
    </location>
</feature>
<feature type="region of interest" description="Hexokinase small subdomain" evidence="4">
    <location>
        <begin position="99"/>
        <end position="237"/>
    </location>
</feature>
<feature type="region of interest" description="Hexokinase large subdomain" evidence="4">
    <location>
        <begin position="238"/>
        <end position="487"/>
    </location>
</feature>
<feature type="binding site" evidence="2">
    <location>
        <position position="113"/>
    </location>
    <ligand>
        <name>ADP</name>
        <dbReference type="ChEBI" id="CHEBI:456216"/>
    </ligand>
</feature>
<feature type="binding site" evidence="2">
    <location>
        <position position="114"/>
    </location>
    <ligand>
        <name>ADP</name>
        <dbReference type="ChEBI" id="CHEBI:456216"/>
    </ligand>
</feature>
<feature type="binding site" evidence="2">
    <location>
        <position position="115"/>
    </location>
    <ligand>
        <name>ADP</name>
        <dbReference type="ChEBI" id="CHEBI:456216"/>
    </ligand>
</feature>
<feature type="binding site" evidence="2">
    <location>
        <position position="203"/>
    </location>
    <ligand>
        <name>D-glucose</name>
        <dbReference type="ChEBI" id="CHEBI:4167"/>
    </ligand>
</feature>
<feature type="binding site" evidence="2">
    <location>
        <position position="204"/>
    </location>
    <ligand>
        <name>D-glucose</name>
        <dbReference type="ChEBI" id="CHEBI:4167"/>
    </ligand>
</feature>
<feature type="binding site" evidence="2">
    <location>
        <position position="238"/>
    </location>
    <ligand>
        <name>D-glucose</name>
        <dbReference type="ChEBI" id="CHEBI:4167"/>
    </ligand>
</feature>
<feature type="binding site" evidence="2">
    <location>
        <position position="239"/>
    </location>
    <ligand>
        <name>D-glucose</name>
        <dbReference type="ChEBI" id="CHEBI:4167"/>
    </ligand>
</feature>
<feature type="binding site" evidence="2">
    <location>
        <position position="262"/>
    </location>
    <ligand>
        <name>ADP</name>
        <dbReference type="ChEBI" id="CHEBI:456216"/>
    </ligand>
</feature>
<feature type="binding site" evidence="2">
    <location>
        <position position="265"/>
    </location>
    <ligand>
        <name>D-glucose</name>
        <dbReference type="ChEBI" id="CHEBI:4167"/>
    </ligand>
</feature>
<feature type="binding site" evidence="2">
    <location>
        <position position="293"/>
    </location>
    <ligand>
        <name>D-glucose</name>
        <dbReference type="ChEBI" id="CHEBI:4167"/>
    </ligand>
</feature>
<feature type="binding site" evidence="2">
    <location>
        <position position="324"/>
    </location>
    <ligand>
        <name>D-glucose</name>
        <dbReference type="ChEBI" id="CHEBI:4167"/>
    </ligand>
</feature>
<feature type="binding site" evidence="2">
    <location>
        <position position="452"/>
    </location>
    <ligand>
        <name>ADP</name>
        <dbReference type="ChEBI" id="CHEBI:456216"/>
    </ligand>
</feature>
<feature type="mutagenesis site" description="Abolishes glucose phosphorylation activity." evidence="6">
    <original>G</original>
    <variation>D</variation>
    <location>
        <position position="113"/>
    </location>
</feature>
<feature type="mutagenesis site" description="Abolishes glucose phosphorylation activity." evidence="6">
    <original>S</original>
    <variation>A</variation>
    <location>
        <position position="186"/>
    </location>
</feature>
<accession>Q5W676</accession>
<accession>A0A0P0WPR6</accession>
<accession>Q0DGM7</accession>
<accession>Q94JW6</accession>
<name>HXK5_ORYSJ</name>
<comment type="function">
    <text evidence="5 6 7">Fructose and glucose phosphorylating enzyme (PubMed:16552590). Functions as a glucose sensor for plant growth and photosynthesis (PubMed:19010999). Is essential for pollen development, germination, and tube growth (PubMed:31671177). Its activity is necessary for the starch utilization pathway during pollen germination and tube growth, as well as for starch biosynthesis during pollen maturation (PubMed:31671177).</text>
</comment>
<comment type="catalytic activity">
    <reaction evidence="9">
        <text>a D-hexose + ATP = a D-hexose 6-phosphate + ADP + H(+)</text>
        <dbReference type="Rhea" id="RHEA:22740"/>
        <dbReference type="ChEBI" id="CHEBI:4194"/>
        <dbReference type="ChEBI" id="CHEBI:15378"/>
        <dbReference type="ChEBI" id="CHEBI:30616"/>
        <dbReference type="ChEBI" id="CHEBI:229467"/>
        <dbReference type="ChEBI" id="CHEBI:456216"/>
        <dbReference type="EC" id="2.7.1.1"/>
    </reaction>
    <physiologicalReaction direction="left-to-right" evidence="9">
        <dbReference type="Rhea" id="RHEA:22741"/>
    </physiologicalReaction>
</comment>
<comment type="catalytic activity">
    <reaction evidence="9">
        <text>D-fructose + ATP = D-fructose 6-phosphate + ADP + H(+)</text>
        <dbReference type="Rhea" id="RHEA:16125"/>
        <dbReference type="ChEBI" id="CHEBI:15378"/>
        <dbReference type="ChEBI" id="CHEBI:30616"/>
        <dbReference type="ChEBI" id="CHEBI:37721"/>
        <dbReference type="ChEBI" id="CHEBI:61527"/>
        <dbReference type="ChEBI" id="CHEBI:456216"/>
        <dbReference type="EC" id="2.7.1.1"/>
    </reaction>
    <physiologicalReaction direction="left-to-right" evidence="9">
        <dbReference type="Rhea" id="RHEA:16126"/>
    </physiologicalReaction>
</comment>
<comment type="catalytic activity">
    <reaction evidence="9">
        <text>D-glucose + ATP = D-glucose 6-phosphate + ADP + H(+)</text>
        <dbReference type="Rhea" id="RHEA:17825"/>
        <dbReference type="ChEBI" id="CHEBI:4167"/>
        <dbReference type="ChEBI" id="CHEBI:15378"/>
        <dbReference type="ChEBI" id="CHEBI:30616"/>
        <dbReference type="ChEBI" id="CHEBI:61548"/>
        <dbReference type="ChEBI" id="CHEBI:456216"/>
        <dbReference type="EC" id="2.7.1.1"/>
    </reaction>
    <physiologicalReaction direction="left-to-right" evidence="9">
        <dbReference type="Rhea" id="RHEA:17826"/>
    </physiologicalReaction>
</comment>
<comment type="pathway">
    <text evidence="9">Carbohydrate metabolism; hexose metabolism.</text>
</comment>
<comment type="pathway">
    <text evidence="9">Carbohydrate degradation; glycolysis; D-glyceraldehyde 3-phosphate and glycerone phosphate from D-glucose: step 1/4.</text>
</comment>
<comment type="subcellular location">
    <subcellularLocation>
        <location evidence="1">Plastid</location>
        <location evidence="1">Chloroplast outer membrane</location>
        <topology evidence="1">Single-pass membrane protein</topology>
    </subcellularLocation>
</comment>
<comment type="tissue specificity">
    <text evidence="5">Expressed in roots, leaves, flowers, immature seeds, endosperm and seed coat.</text>
</comment>
<comment type="developmental stage">
    <text evidence="5 7">Expressed during flower development until 15 days after flowering (PubMed:16552590). In pollen development, expression increases gradually from meiosis/tetrad stage to mature pollen stage, with the highest expression in the latter (PubMed:31671177).</text>
</comment>
<comment type="induction">
    <text evidence="5">By glucose or fructose treatment in leaves.</text>
</comment>
<comment type="disruption phenotype">
    <text evidence="7">Male sterility of pollen grains due to impaired synthesis and utilization of starch in pollen grains.</text>
</comment>
<comment type="miscellaneous">
    <text evidence="6">Plants over-expressing HXK5 exhibit hypersensitive plant growth retardation and enhanced repression of the photosynthetic gene RbcS in response to glucose treatment.</text>
</comment>
<comment type="similarity">
    <text evidence="4 8">Belongs to the hexokinase family.</text>
</comment>
<evidence type="ECO:0000250" key="1"/>
<evidence type="ECO:0000250" key="2">
    <source>
        <dbReference type="UniProtKB" id="Q8LQ68"/>
    </source>
</evidence>
<evidence type="ECO:0000255" key="3"/>
<evidence type="ECO:0000255" key="4">
    <source>
        <dbReference type="PROSITE-ProRule" id="PRU01084"/>
    </source>
</evidence>
<evidence type="ECO:0000269" key="5">
    <source>
    </source>
</evidence>
<evidence type="ECO:0000269" key="6">
    <source>
    </source>
</evidence>
<evidence type="ECO:0000269" key="7">
    <source>
    </source>
</evidence>
<evidence type="ECO:0000305" key="8"/>
<evidence type="ECO:0000305" key="9">
    <source>
    </source>
</evidence>
<evidence type="ECO:0000312" key="10">
    <source>
        <dbReference type="EMBL" id="BAF17996.1"/>
    </source>
</evidence>
<evidence type="ECO:0000312" key="11">
    <source>
        <dbReference type="EMBL" id="EEE64409.1"/>
    </source>
</evidence>
<sequence>MGKAAAVGTAVVVAAAVGVAVVLARRRRRRDLELVEGAAAERKRKVAAVIEDVEHALSTPTALLRGISDAMVTEMERGLRGDSHAMVKMLITYVDNLPTGNEQGLFYALDLGGTNFRVLRVQLGGKEKRVVQQQYEEVSIPPHLMVGTSMELFDFIASALSKFVDTEGDDFHLPEGRQRELGFTFSFPVSQTSISSGTLIKWTKGFSINDAVGEDVVSELGKAMERQGLDMKIAALVNDTVGTLAGGRYADNSVVAAIILGTGTNAAYVENANAIPKWTGLLPRSGNMVINTEWGSFKSDKLPLSEFDKAMDFESLNPGEQIYEKLISGMYLGEIVRRILLKLAHDAALFGDVVPSKLEQPFVLRTPDMSAMHHDSSHDLKTVGAKLKDIVGVPDTSLEVRYITSHICDIVAERAARLAAAGIYGVLKKLGRDKMPKDGSKMPRTVIALDGGLYEHYKKFSSCLESTLTDLLGDDVSSSVVTKLANDGSGIGAALLAASHSQYAEID</sequence>